<evidence type="ECO:0000250" key="1"/>
<evidence type="ECO:0000255" key="2">
    <source>
        <dbReference type="HAMAP-Rule" id="MF_03125"/>
    </source>
</evidence>
<feature type="chain" id="PRO_0000399333" description="Adenylosuccinate synthetase">
    <location>
        <begin position="1"/>
        <end position="428"/>
    </location>
</feature>
<feature type="active site" description="Proton acceptor" evidence="2">
    <location>
        <position position="13"/>
    </location>
</feature>
<feature type="active site" description="Proton donor" evidence="2">
    <location>
        <position position="41"/>
    </location>
</feature>
<feature type="binding site" evidence="2">
    <location>
        <begin position="12"/>
        <end position="18"/>
    </location>
    <ligand>
        <name>GTP</name>
        <dbReference type="ChEBI" id="CHEBI:37565"/>
    </ligand>
</feature>
<feature type="binding site" description="in other chain" evidence="2">
    <location>
        <begin position="13"/>
        <end position="16"/>
    </location>
    <ligand>
        <name>IMP</name>
        <dbReference type="ChEBI" id="CHEBI:58053"/>
        <note>ligand shared between dimeric partners</note>
    </ligand>
</feature>
<feature type="binding site" evidence="2">
    <location>
        <position position="13"/>
    </location>
    <ligand>
        <name>Mg(2+)</name>
        <dbReference type="ChEBI" id="CHEBI:18420"/>
    </ligand>
</feature>
<feature type="binding site" description="in other chain" evidence="2">
    <location>
        <begin position="38"/>
        <end position="41"/>
    </location>
    <ligand>
        <name>IMP</name>
        <dbReference type="ChEBI" id="CHEBI:58053"/>
        <note>ligand shared between dimeric partners</note>
    </ligand>
</feature>
<feature type="binding site" evidence="2">
    <location>
        <begin position="40"/>
        <end position="42"/>
    </location>
    <ligand>
        <name>GTP</name>
        <dbReference type="ChEBI" id="CHEBI:37565"/>
    </ligand>
</feature>
<feature type="binding site" evidence="2">
    <location>
        <position position="40"/>
    </location>
    <ligand>
        <name>Mg(2+)</name>
        <dbReference type="ChEBI" id="CHEBI:18420"/>
    </ligand>
</feature>
<feature type="binding site" description="in other chain" evidence="2">
    <location>
        <position position="133"/>
    </location>
    <ligand>
        <name>IMP</name>
        <dbReference type="ChEBI" id="CHEBI:58053"/>
        <note>ligand shared between dimeric partners</note>
    </ligand>
</feature>
<feature type="binding site" evidence="2">
    <location>
        <position position="147"/>
    </location>
    <ligand>
        <name>IMP</name>
        <dbReference type="ChEBI" id="CHEBI:58053"/>
        <note>ligand shared between dimeric partners</note>
    </ligand>
</feature>
<feature type="binding site" description="in other chain" evidence="2">
    <location>
        <position position="224"/>
    </location>
    <ligand>
        <name>IMP</name>
        <dbReference type="ChEBI" id="CHEBI:58053"/>
        <note>ligand shared between dimeric partners</note>
    </ligand>
</feature>
<feature type="binding site" description="in other chain" evidence="2">
    <location>
        <position position="239"/>
    </location>
    <ligand>
        <name>IMP</name>
        <dbReference type="ChEBI" id="CHEBI:58053"/>
        <note>ligand shared between dimeric partners</note>
    </ligand>
</feature>
<feature type="binding site" evidence="2">
    <location>
        <begin position="299"/>
        <end position="305"/>
    </location>
    <ligand>
        <name>substrate</name>
    </ligand>
</feature>
<feature type="binding site" description="in other chain" evidence="2">
    <location>
        <position position="303"/>
    </location>
    <ligand>
        <name>IMP</name>
        <dbReference type="ChEBI" id="CHEBI:58053"/>
        <note>ligand shared between dimeric partners</note>
    </ligand>
</feature>
<feature type="binding site" evidence="2">
    <location>
        <position position="305"/>
    </location>
    <ligand>
        <name>GTP</name>
        <dbReference type="ChEBI" id="CHEBI:37565"/>
    </ligand>
</feature>
<feature type="binding site" evidence="2">
    <location>
        <begin position="331"/>
        <end position="333"/>
    </location>
    <ligand>
        <name>GTP</name>
        <dbReference type="ChEBI" id="CHEBI:37565"/>
    </ligand>
</feature>
<feature type="binding site" evidence="2">
    <location>
        <begin position="413"/>
        <end position="415"/>
    </location>
    <ligand>
        <name>GTP</name>
        <dbReference type="ChEBI" id="CHEBI:37565"/>
    </ligand>
</feature>
<protein>
    <recommendedName>
        <fullName evidence="2">Adenylosuccinate synthetase</fullName>
        <shortName evidence="2">AMPSase</shortName>
        <shortName evidence="2">AdSS</shortName>
        <ecNumber evidence="2">6.3.4.4</ecNumber>
    </recommendedName>
    <alternativeName>
        <fullName evidence="2">IMP--aspartate ligase</fullName>
    </alternativeName>
</protein>
<proteinExistence type="inferred from homology"/>
<organism>
    <name type="scientific">Coprinopsis cinerea (strain Okayama-7 / 130 / ATCC MYA-4618 / FGSC 9003)</name>
    <name type="common">Inky cap fungus</name>
    <name type="synonym">Hormographiella aspergillata</name>
    <dbReference type="NCBI Taxonomy" id="240176"/>
    <lineage>
        <taxon>Eukaryota</taxon>
        <taxon>Fungi</taxon>
        <taxon>Dikarya</taxon>
        <taxon>Basidiomycota</taxon>
        <taxon>Agaricomycotina</taxon>
        <taxon>Agaricomycetes</taxon>
        <taxon>Agaricomycetidae</taxon>
        <taxon>Agaricales</taxon>
        <taxon>Agaricineae</taxon>
        <taxon>Psathyrellaceae</taxon>
        <taxon>Coprinopsis</taxon>
    </lineage>
</organism>
<accession>A8NDT2</accession>
<gene>
    <name type="ORF">CC1G_10072</name>
</gene>
<sequence length="428" mass="46681">MSVSVVLGSQWGDEGKGKLVDILAGDIDVCARCAGGNNAGHTIVVPIDGVEKSFAFHLLPSGLVNPKCTGLLGNGVVIHLPSFFAELDALESQGLDCTNRLFISDRAQLVFDFHQIVDGLKEVELGGSSIGTTKKGIGPAYSGKASRSGLRVHHLFEPETFAAKFRKVVEGRFKRYGHFEYDTEGEIERYRKLAERLRPYVVDSVAFIHKALASGKRVLVEGANALMLDIDFGTYPFVTSSSTSIGGVCTGLGIPPKMVGKTIGVVKAYTTRVGAGPFPTEQLNDVGVHLQEVGHEYGTTTGRRRRCGWLDLAVMKHSCLINGYDAFNLTKLDVLDGLDEIKVGVSYSLDGKELSSFPADLELLSRVEVNYVTLPGWKTPITEIRNYDDLPANCKKYINFIEEQLKVPIEWIGVGPGRDAMITKRKDQ</sequence>
<keyword id="KW-0963">Cytoplasm</keyword>
<keyword id="KW-0342">GTP-binding</keyword>
<keyword id="KW-0436">Ligase</keyword>
<keyword id="KW-0460">Magnesium</keyword>
<keyword id="KW-0479">Metal-binding</keyword>
<keyword id="KW-0547">Nucleotide-binding</keyword>
<keyword id="KW-0658">Purine biosynthesis</keyword>
<keyword id="KW-1185">Reference proteome</keyword>
<reference key="1">
    <citation type="journal article" date="2010" name="Proc. Natl. Acad. Sci. U.S.A.">
        <title>Insights into evolution of multicellular fungi from the assembled chromosomes of the mushroom Coprinopsis cinerea (Coprinus cinereus).</title>
        <authorList>
            <person name="Stajich J.E."/>
            <person name="Wilke S.K."/>
            <person name="Ahren D."/>
            <person name="Au C.H."/>
            <person name="Birren B.W."/>
            <person name="Borodovsky M."/>
            <person name="Burns C."/>
            <person name="Canbaeck B."/>
            <person name="Casselton L.A."/>
            <person name="Cheng C.K."/>
            <person name="Deng J."/>
            <person name="Dietrich F.S."/>
            <person name="Fargo D.C."/>
            <person name="Farman M.L."/>
            <person name="Gathman A.C."/>
            <person name="Goldberg J."/>
            <person name="Guigo R."/>
            <person name="Hoegger P.J."/>
            <person name="Hooker J.B."/>
            <person name="Huggins A."/>
            <person name="James T.Y."/>
            <person name="Kamada T."/>
            <person name="Kilaru S."/>
            <person name="Kodira C."/>
            <person name="Kuees U."/>
            <person name="Kupfer D."/>
            <person name="Kwan H.S."/>
            <person name="Lomsadze A."/>
            <person name="Li W."/>
            <person name="Lilly W.W."/>
            <person name="Ma L.-J."/>
            <person name="Mackey A.J."/>
            <person name="Manning G."/>
            <person name="Martin F."/>
            <person name="Muraguchi H."/>
            <person name="Natvig D.O."/>
            <person name="Palmerini H."/>
            <person name="Ramesh M.A."/>
            <person name="Rehmeyer C.J."/>
            <person name="Roe B.A."/>
            <person name="Shenoy N."/>
            <person name="Stanke M."/>
            <person name="Ter-Hovhannisyan V."/>
            <person name="Tunlid A."/>
            <person name="Velagapudi R."/>
            <person name="Vision T.J."/>
            <person name="Zeng Q."/>
            <person name="Zolan M.E."/>
            <person name="Pukkila P.J."/>
        </authorList>
    </citation>
    <scope>NUCLEOTIDE SEQUENCE [LARGE SCALE GENOMIC DNA]</scope>
    <source>
        <strain>Okayama-7 / 130 / ATCC MYA-4618 / FGSC 9003</strain>
    </source>
</reference>
<dbReference type="EC" id="6.3.4.4" evidence="2"/>
<dbReference type="EMBL" id="AACS02000002">
    <property type="protein sequence ID" value="EAU88944.1"/>
    <property type="molecule type" value="Genomic_DNA"/>
</dbReference>
<dbReference type="RefSeq" id="XP_001832853.1">
    <property type="nucleotide sequence ID" value="XM_001832801.2"/>
</dbReference>
<dbReference type="SMR" id="A8NDT2"/>
<dbReference type="FunCoup" id="A8NDT2">
    <property type="interactions" value="561"/>
</dbReference>
<dbReference type="STRING" id="240176.A8NDT2"/>
<dbReference type="GeneID" id="6009344"/>
<dbReference type="KEGG" id="cci:CC1G_10072"/>
<dbReference type="VEuPathDB" id="FungiDB:CC1G_10072"/>
<dbReference type="eggNOG" id="KOG1355">
    <property type="taxonomic scope" value="Eukaryota"/>
</dbReference>
<dbReference type="HOGENOM" id="CLU_029848_0_0_1"/>
<dbReference type="InParanoid" id="A8NDT2"/>
<dbReference type="OMA" id="FHHAKPI"/>
<dbReference type="OrthoDB" id="10265645at2759"/>
<dbReference type="UniPathway" id="UPA00075">
    <property type="reaction ID" value="UER00335"/>
</dbReference>
<dbReference type="Proteomes" id="UP000001861">
    <property type="component" value="Unassembled WGS sequence"/>
</dbReference>
<dbReference type="GO" id="GO:0005737">
    <property type="term" value="C:cytoplasm"/>
    <property type="evidence" value="ECO:0007669"/>
    <property type="project" value="UniProtKB-SubCell"/>
</dbReference>
<dbReference type="GO" id="GO:0004019">
    <property type="term" value="F:adenylosuccinate synthase activity"/>
    <property type="evidence" value="ECO:0007669"/>
    <property type="project" value="UniProtKB-UniRule"/>
</dbReference>
<dbReference type="GO" id="GO:0005525">
    <property type="term" value="F:GTP binding"/>
    <property type="evidence" value="ECO:0007669"/>
    <property type="project" value="UniProtKB-UniRule"/>
</dbReference>
<dbReference type="GO" id="GO:0000287">
    <property type="term" value="F:magnesium ion binding"/>
    <property type="evidence" value="ECO:0007669"/>
    <property type="project" value="UniProtKB-UniRule"/>
</dbReference>
<dbReference type="GO" id="GO:0044208">
    <property type="term" value="P:'de novo' AMP biosynthetic process"/>
    <property type="evidence" value="ECO:0007669"/>
    <property type="project" value="UniProtKB-UniRule"/>
</dbReference>
<dbReference type="GO" id="GO:0046040">
    <property type="term" value="P:IMP metabolic process"/>
    <property type="evidence" value="ECO:0007669"/>
    <property type="project" value="TreeGrafter"/>
</dbReference>
<dbReference type="CDD" id="cd03108">
    <property type="entry name" value="AdSS"/>
    <property type="match status" value="1"/>
</dbReference>
<dbReference type="FunFam" id="3.90.170.10:FF:000001">
    <property type="entry name" value="Adenylosuccinate synthetase"/>
    <property type="match status" value="1"/>
</dbReference>
<dbReference type="FunFam" id="1.10.300.10:FF:000002">
    <property type="entry name" value="Adenylosuccinate synthetase, chloroplastic"/>
    <property type="match status" value="1"/>
</dbReference>
<dbReference type="Gene3D" id="3.40.440.10">
    <property type="entry name" value="Adenylosuccinate Synthetase, subunit A, domain 1"/>
    <property type="match status" value="1"/>
</dbReference>
<dbReference type="Gene3D" id="1.10.300.10">
    <property type="entry name" value="Adenylosuccinate Synthetase, subunit A, domain 2"/>
    <property type="match status" value="1"/>
</dbReference>
<dbReference type="Gene3D" id="3.90.170.10">
    <property type="entry name" value="Adenylosuccinate Synthetase, subunit A, domain 3"/>
    <property type="match status" value="1"/>
</dbReference>
<dbReference type="HAMAP" id="MF_00011">
    <property type="entry name" value="Adenylosucc_synth"/>
    <property type="match status" value="1"/>
</dbReference>
<dbReference type="InterPro" id="IPR018220">
    <property type="entry name" value="Adenylosuccin_syn_GTP-bd"/>
</dbReference>
<dbReference type="InterPro" id="IPR033128">
    <property type="entry name" value="Adenylosuccin_syn_Lys_AS"/>
</dbReference>
<dbReference type="InterPro" id="IPR042109">
    <property type="entry name" value="Adenylosuccinate_synth_dom1"/>
</dbReference>
<dbReference type="InterPro" id="IPR042110">
    <property type="entry name" value="Adenylosuccinate_synth_dom2"/>
</dbReference>
<dbReference type="InterPro" id="IPR042111">
    <property type="entry name" value="Adenylosuccinate_synth_dom3"/>
</dbReference>
<dbReference type="InterPro" id="IPR001114">
    <property type="entry name" value="Adenylosuccinate_synthetase"/>
</dbReference>
<dbReference type="InterPro" id="IPR027417">
    <property type="entry name" value="P-loop_NTPase"/>
</dbReference>
<dbReference type="NCBIfam" id="NF002223">
    <property type="entry name" value="PRK01117.1"/>
    <property type="match status" value="1"/>
</dbReference>
<dbReference type="NCBIfam" id="TIGR00184">
    <property type="entry name" value="purA"/>
    <property type="match status" value="1"/>
</dbReference>
<dbReference type="PANTHER" id="PTHR11846">
    <property type="entry name" value="ADENYLOSUCCINATE SYNTHETASE"/>
    <property type="match status" value="1"/>
</dbReference>
<dbReference type="PANTHER" id="PTHR11846:SF0">
    <property type="entry name" value="ADENYLOSUCCINATE SYNTHETASE"/>
    <property type="match status" value="1"/>
</dbReference>
<dbReference type="Pfam" id="PF00709">
    <property type="entry name" value="Adenylsucc_synt"/>
    <property type="match status" value="1"/>
</dbReference>
<dbReference type="SMART" id="SM00788">
    <property type="entry name" value="Adenylsucc_synt"/>
    <property type="match status" value="1"/>
</dbReference>
<dbReference type="SUPFAM" id="SSF52540">
    <property type="entry name" value="P-loop containing nucleoside triphosphate hydrolases"/>
    <property type="match status" value="1"/>
</dbReference>
<dbReference type="PROSITE" id="PS01266">
    <property type="entry name" value="ADENYLOSUCCIN_SYN_1"/>
    <property type="match status" value="1"/>
</dbReference>
<dbReference type="PROSITE" id="PS00513">
    <property type="entry name" value="ADENYLOSUCCIN_SYN_2"/>
    <property type="match status" value="1"/>
</dbReference>
<name>PURA_COPC7</name>
<comment type="function">
    <text evidence="1">Plays an important role in the de novo pathway and in the salvage pathway of purine nucleotide biosynthesis. Catalyzes the first committed step in the biosynthesis of AMP from IMP (By similarity).</text>
</comment>
<comment type="catalytic activity">
    <reaction evidence="2">
        <text>IMP + L-aspartate + GTP = N(6)-(1,2-dicarboxyethyl)-AMP + GDP + phosphate + 2 H(+)</text>
        <dbReference type="Rhea" id="RHEA:15753"/>
        <dbReference type="ChEBI" id="CHEBI:15378"/>
        <dbReference type="ChEBI" id="CHEBI:29991"/>
        <dbReference type="ChEBI" id="CHEBI:37565"/>
        <dbReference type="ChEBI" id="CHEBI:43474"/>
        <dbReference type="ChEBI" id="CHEBI:57567"/>
        <dbReference type="ChEBI" id="CHEBI:58053"/>
        <dbReference type="ChEBI" id="CHEBI:58189"/>
        <dbReference type="EC" id="6.3.4.4"/>
    </reaction>
</comment>
<comment type="cofactor">
    <cofactor evidence="2">
        <name>Mg(2+)</name>
        <dbReference type="ChEBI" id="CHEBI:18420"/>
    </cofactor>
    <text evidence="2">Binds 1 Mg(2+) ion per subunit.</text>
</comment>
<comment type="pathway">
    <text evidence="2">Purine metabolism; AMP biosynthesis via de novo pathway; AMP from IMP: step 1/2.</text>
</comment>
<comment type="subunit">
    <text evidence="2">Homodimer.</text>
</comment>
<comment type="subcellular location">
    <subcellularLocation>
        <location evidence="2">Cytoplasm</location>
    </subcellularLocation>
</comment>
<comment type="similarity">
    <text evidence="2">Belongs to the adenylosuccinate synthetase family.</text>
</comment>